<gene>
    <name evidence="1" type="primary">rraA</name>
    <name type="ordered locus">SeD_A4489</name>
</gene>
<accession>B5FPT8</accession>
<reference key="1">
    <citation type="journal article" date="2011" name="J. Bacteriol.">
        <title>Comparative genomics of 28 Salmonella enterica isolates: evidence for CRISPR-mediated adaptive sublineage evolution.</title>
        <authorList>
            <person name="Fricke W.F."/>
            <person name="Mammel M.K."/>
            <person name="McDermott P.F."/>
            <person name="Tartera C."/>
            <person name="White D.G."/>
            <person name="Leclerc J.E."/>
            <person name="Ravel J."/>
            <person name="Cebula T.A."/>
        </authorList>
    </citation>
    <scope>NUCLEOTIDE SEQUENCE [LARGE SCALE GENOMIC DNA]</scope>
    <source>
        <strain>CT_02021853</strain>
    </source>
</reference>
<name>RRAA_SALDC</name>
<comment type="function">
    <text evidence="1">Globally modulates RNA abundance by binding to RNase E (Rne) and regulating its endonucleolytic activity. Can modulate Rne action in a substrate-dependent manner by altering the composition of the degradosome. Modulates RNA-binding and helicase activities of the degradosome.</text>
</comment>
<comment type="subunit">
    <text evidence="1">Homotrimer. Binds to both RNA-binding sites in the C-terminal region of Rne and to RhlB.</text>
</comment>
<comment type="subcellular location">
    <subcellularLocation>
        <location evidence="1">Cytoplasm</location>
    </subcellularLocation>
</comment>
<comment type="similarity">
    <text evidence="1">Belongs to the RraA family.</text>
</comment>
<feature type="chain" id="PRO_1000194872" description="Regulator of ribonuclease activity A">
    <location>
        <begin position="1"/>
        <end position="161"/>
    </location>
</feature>
<keyword id="KW-0963">Cytoplasm</keyword>
<proteinExistence type="inferred from homology"/>
<sequence>MKYDTSELCDIYQEDVNVVEPLFSNFGGRSSFGGQIITVKCFEDNGLLYDLLEQNGRGRVLLVDGGGSVRRALVDAELARLATQNEWEGLVIYGAVRQVDDLEELDIGIQAIAAIPVGAAGEGIGESDVRVNFGGVTFFSGDHLYADNTGIILSEDPLDIE</sequence>
<dbReference type="EMBL" id="CP001144">
    <property type="protein sequence ID" value="ACH75292.1"/>
    <property type="molecule type" value="Genomic_DNA"/>
</dbReference>
<dbReference type="RefSeq" id="WP_000872918.1">
    <property type="nucleotide sequence ID" value="NC_011205.1"/>
</dbReference>
<dbReference type="SMR" id="B5FPT8"/>
<dbReference type="KEGG" id="sed:SeD_A4489"/>
<dbReference type="HOGENOM" id="CLU_072626_4_0_6"/>
<dbReference type="Proteomes" id="UP000008322">
    <property type="component" value="Chromosome"/>
</dbReference>
<dbReference type="GO" id="GO:0005829">
    <property type="term" value="C:cytosol"/>
    <property type="evidence" value="ECO:0007669"/>
    <property type="project" value="TreeGrafter"/>
</dbReference>
<dbReference type="GO" id="GO:0060698">
    <property type="term" value="F:endoribonuclease inhibitor activity"/>
    <property type="evidence" value="ECO:0007669"/>
    <property type="project" value="UniProtKB-UniRule"/>
</dbReference>
<dbReference type="GO" id="GO:0019899">
    <property type="term" value="F:enzyme binding"/>
    <property type="evidence" value="ECO:0007669"/>
    <property type="project" value="UniProtKB-UniRule"/>
</dbReference>
<dbReference type="GO" id="GO:1902369">
    <property type="term" value="P:negative regulation of RNA catabolic process"/>
    <property type="evidence" value="ECO:0007669"/>
    <property type="project" value="TreeGrafter"/>
</dbReference>
<dbReference type="CDD" id="cd16841">
    <property type="entry name" value="RraA_family"/>
    <property type="match status" value="1"/>
</dbReference>
<dbReference type="FunFam" id="3.50.30.40:FF:000001">
    <property type="entry name" value="Regulator of ribonuclease activity A"/>
    <property type="match status" value="1"/>
</dbReference>
<dbReference type="Gene3D" id="3.50.30.40">
    <property type="entry name" value="Ribonuclease E inhibitor RraA/RraA-like"/>
    <property type="match status" value="1"/>
</dbReference>
<dbReference type="HAMAP" id="MF_00471">
    <property type="entry name" value="RraA"/>
    <property type="match status" value="1"/>
</dbReference>
<dbReference type="InterPro" id="IPR010203">
    <property type="entry name" value="RraA"/>
</dbReference>
<dbReference type="InterPro" id="IPR005493">
    <property type="entry name" value="RraA/RraA-like"/>
</dbReference>
<dbReference type="InterPro" id="IPR036704">
    <property type="entry name" value="RraA/RraA-like_sf"/>
</dbReference>
<dbReference type="InterPro" id="IPR014339">
    <property type="entry name" value="RraA_gpbac"/>
</dbReference>
<dbReference type="NCBIfam" id="TIGR01935">
    <property type="entry name" value="NOT-MenG"/>
    <property type="match status" value="1"/>
</dbReference>
<dbReference type="NCBIfam" id="NF006875">
    <property type="entry name" value="PRK09372.1"/>
    <property type="match status" value="1"/>
</dbReference>
<dbReference type="NCBIfam" id="TIGR02998">
    <property type="entry name" value="RraA_entero"/>
    <property type="match status" value="1"/>
</dbReference>
<dbReference type="PANTHER" id="PTHR33254">
    <property type="entry name" value="4-HYDROXY-4-METHYL-2-OXOGLUTARATE ALDOLASE 3-RELATED"/>
    <property type="match status" value="1"/>
</dbReference>
<dbReference type="PANTHER" id="PTHR33254:SF29">
    <property type="entry name" value="REGULATOR OF RIBONUCLEASE ACTIVITY A"/>
    <property type="match status" value="1"/>
</dbReference>
<dbReference type="Pfam" id="PF03737">
    <property type="entry name" value="RraA-like"/>
    <property type="match status" value="1"/>
</dbReference>
<dbReference type="SUPFAM" id="SSF89562">
    <property type="entry name" value="RraA-like"/>
    <property type="match status" value="1"/>
</dbReference>
<organism>
    <name type="scientific">Salmonella dublin (strain CT_02021853)</name>
    <dbReference type="NCBI Taxonomy" id="439851"/>
    <lineage>
        <taxon>Bacteria</taxon>
        <taxon>Pseudomonadati</taxon>
        <taxon>Pseudomonadota</taxon>
        <taxon>Gammaproteobacteria</taxon>
        <taxon>Enterobacterales</taxon>
        <taxon>Enterobacteriaceae</taxon>
        <taxon>Salmonella</taxon>
    </lineage>
</organism>
<protein>
    <recommendedName>
        <fullName evidence="1">Regulator of ribonuclease activity A</fullName>
    </recommendedName>
</protein>
<evidence type="ECO:0000255" key="1">
    <source>
        <dbReference type="HAMAP-Rule" id="MF_00471"/>
    </source>
</evidence>